<dbReference type="EMBL" id="AF188846">
    <property type="protein sequence ID" value="AAF73296.1"/>
    <property type="molecule type" value="Genomic_DNA"/>
</dbReference>
<dbReference type="RefSeq" id="YP_009113754.1">
    <property type="nucleotide sequence ID" value="NC_026040.1"/>
</dbReference>
<dbReference type="SMR" id="Q9MSR2"/>
<dbReference type="GeneID" id="22832232"/>
<dbReference type="GO" id="GO:0009535">
    <property type="term" value="C:chloroplast thylakoid membrane"/>
    <property type="evidence" value="ECO:0007669"/>
    <property type="project" value="UniProtKB-SubCell"/>
</dbReference>
<dbReference type="GO" id="GO:0009539">
    <property type="term" value="C:photosystem II reaction center"/>
    <property type="evidence" value="ECO:0007669"/>
    <property type="project" value="InterPro"/>
</dbReference>
<dbReference type="GO" id="GO:0015979">
    <property type="term" value="P:photosynthesis"/>
    <property type="evidence" value="ECO:0007669"/>
    <property type="project" value="UniProtKB-UniRule"/>
</dbReference>
<dbReference type="HAMAP" id="MF_00808">
    <property type="entry name" value="PSII_PsbT"/>
    <property type="match status" value="1"/>
</dbReference>
<dbReference type="InterPro" id="IPR001743">
    <property type="entry name" value="PSII_PsbT"/>
</dbReference>
<dbReference type="InterPro" id="IPR037268">
    <property type="entry name" value="PSII_PsbT_sf"/>
</dbReference>
<dbReference type="PANTHER" id="PTHR36411">
    <property type="match status" value="1"/>
</dbReference>
<dbReference type="PANTHER" id="PTHR36411:SF2">
    <property type="entry name" value="PHOTOSYSTEM II REACTION CENTER PROTEIN T"/>
    <property type="match status" value="1"/>
</dbReference>
<dbReference type="Pfam" id="PF01405">
    <property type="entry name" value="PsbT"/>
    <property type="match status" value="1"/>
</dbReference>
<dbReference type="SUPFAM" id="SSF161029">
    <property type="entry name" value="Photosystem II reaction center protein T, PsbT"/>
    <property type="match status" value="1"/>
</dbReference>
<sequence>MEALVYTFLLVSTLGIIFFAIFFREPPKVPDRGSK</sequence>
<geneLocation type="chloroplast"/>
<reference key="1">
    <citation type="journal article" date="2000" name="Curr. Genet.">
        <title>Evolutionary significance of an unusual chloroplast DNA inversion found in two basal angiosperm lineages.</title>
        <authorList>
            <person name="Graham S.W."/>
            <person name="Olmstead R.G."/>
        </authorList>
    </citation>
    <scope>NUCLEOTIDE SEQUENCE [GENOMIC DNA]</scope>
</reference>
<feature type="chain" id="PRO_0000217998" description="Photosystem II reaction center protein T">
    <location>
        <begin position="1"/>
        <end position="35"/>
    </location>
</feature>
<feature type="transmembrane region" description="Helical" evidence="1">
    <location>
        <begin position="3"/>
        <end position="23"/>
    </location>
</feature>
<organism>
    <name type="scientific">Zamia furfuracea</name>
    <name type="common">Cardboard cycad</name>
    <name type="synonym">Jamaican sago tree</name>
    <dbReference type="NCBI Taxonomy" id="42329"/>
    <lineage>
        <taxon>Eukaryota</taxon>
        <taxon>Viridiplantae</taxon>
        <taxon>Streptophyta</taxon>
        <taxon>Embryophyta</taxon>
        <taxon>Tracheophyta</taxon>
        <taxon>Spermatophyta</taxon>
        <taxon>Cycadidae</taxon>
        <taxon>Cycadales</taxon>
        <taxon>Zamiaceae</taxon>
        <taxon>Zamia</taxon>
    </lineage>
</organism>
<evidence type="ECO:0000255" key="1">
    <source>
        <dbReference type="HAMAP-Rule" id="MF_00808"/>
    </source>
</evidence>
<protein>
    <recommendedName>
        <fullName evidence="1">Photosystem II reaction center protein T</fullName>
        <shortName evidence="1">PSII-T</shortName>
    </recommendedName>
</protein>
<proteinExistence type="inferred from homology"/>
<accession>Q9MSR2</accession>
<comment type="function">
    <text evidence="1">Found at the monomer-monomer interface of the photosystem II (PS II) dimer, plays a role in assembly and dimerization of PSII. PSII is a light-driven water plastoquinone oxidoreductase, using light energy to abstract electrons from H(2)O, generating a proton gradient subsequently used for ATP formation.</text>
</comment>
<comment type="subunit">
    <text evidence="1">PSII is composed of 1 copy each of membrane proteins PsbA, PsbB, PsbC, PsbD, PsbE, PsbF, PsbH, PsbI, PsbJ, PsbK, PsbL, PsbM, PsbT, PsbY, PsbZ, Psb30/Ycf12, at least 3 peripheral proteins of the oxygen-evolving complex and a large number of cofactors. It forms dimeric complexes.</text>
</comment>
<comment type="subcellular location">
    <subcellularLocation>
        <location evidence="1">Plastid</location>
        <location evidence="1">Chloroplast thylakoid membrane</location>
        <topology evidence="1">Single-pass membrane protein</topology>
    </subcellularLocation>
</comment>
<comment type="similarity">
    <text evidence="1">Belongs to the PsbT family.</text>
</comment>
<keyword id="KW-0150">Chloroplast</keyword>
<keyword id="KW-0472">Membrane</keyword>
<keyword id="KW-0602">Photosynthesis</keyword>
<keyword id="KW-0604">Photosystem II</keyword>
<keyword id="KW-0934">Plastid</keyword>
<keyword id="KW-0793">Thylakoid</keyword>
<keyword id="KW-0812">Transmembrane</keyword>
<keyword id="KW-1133">Transmembrane helix</keyword>
<gene>
    <name evidence="1" type="primary">psbT</name>
</gene>
<name>PSBT_ZAMFU</name>